<name>CUED2_RAT</name>
<accession>A1L131</accession>
<comment type="function">
    <text evidence="1">Controls PGR and ESR1 protein levels through their targeting for ubiquitination and subsequent proteasomal degradation.</text>
</comment>
<comment type="subunit">
    <text evidence="1">Interacts with PGR and ESR1.</text>
</comment>
<comment type="subcellular location">
    <subcellularLocation>
        <location evidence="1">Cytoplasm</location>
    </subcellularLocation>
    <subcellularLocation>
        <location evidence="1">Nucleus</location>
    </subcellularLocation>
</comment>
<comment type="domain">
    <text evidence="1">The CUE domain mediates interaction with PGR and ESR1.</text>
</comment>
<comment type="similarity">
    <text evidence="4">Belongs to the CUEDC2 family.</text>
</comment>
<feature type="chain" id="PRO_0000282994" description="CUE domain-containing protein 2">
    <location>
        <begin position="1"/>
        <end position="267"/>
    </location>
</feature>
<feature type="domain" description="CUE" evidence="2">
    <location>
        <begin position="124"/>
        <end position="167"/>
    </location>
</feature>
<feature type="region of interest" description="Disordered" evidence="3">
    <location>
        <begin position="90"/>
        <end position="125"/>
    </location>
</feature>
<feature type="compositionally biased region" description="Basic and acidic residues" evidence="3">
    <location>
        <begin position="91"/>
        <end position="107"/>
    </location>
</feature>
<reference key="1">
    <citation type="journal article" date="2004" name="Genome Res.">
        <title>The status, quality, and expansion of the NIH full-length cDNA project: the Mammalian Gene Collection (MGC).</title>
        <authorList>
            <consortium name="The MGC Project Team"/>
        </authorList>
    </citation>
    <scope>NUCLEOTIDE SEQUENCE [LARGE SCALE MRNA]</scope>
    <source>
        <tissue>Heart</tissue>
    </source>
</reference>
<proteinExistence type="evidence at transcript level"/>
<protein>
    <recommendedName>
        <fullName>CUE domain-containing protein 2</fullName>
    </recommendedName>
</protein>
<organism>
    <name type="scientific">Rattus norvegicus</name>
    <name type="common">Rat</name>
    <dbReference type="NCBI Taxonomy" id="10116"/>
    <lineage>
        <taxon>Eukaryota</taxon>
        <taxon>Metazoa</taxon>
        <taxon>Chordata</taxon>
        <taxon>Craniata</taxon>
        <taxon>Vertebrata</taxon>
        <taxon>Euteleostomi</taxon>
        <taxon>Mammalia</taxon>
        <taxon>Eutheria</taxon>
        <taxon>Euarchontoglires</taxon>
        <taxon>Glires</taxon>
        <taxon>Rodentia</taxon>
        <taxon>Myomorpha</taxon>
        <taxon>Muroidea</taxon>
        <taxon>Muridae</taxon>
        <taxon>Murinae</taxon>
        <taxon>Rattus</taxon>
    </lineage>
</organism>
<evidence type="ECO:0000250" key="1"/>
<evidence type="ECO:0000255" key="2">
    <source>
        <dbReference type="PROSITE-ProRule" id="PRU00468"/>
    </source>
</evidence>
<evidence type="ECO:0000256" key="3">
    <source>
        <dbReference type="SAM" id="MobiDB-lite"/>
    </source>
</evidence>
<evidence type="ECO:0000305" key="4"/>
<keyword id="KW-0963">Cytoplasm</keyword>
<keyword id="KW-0539">Nucleus</keyword>
<keyword id="KW-1185">Reference proteome</keyword>
<keyword id="KW-0833">Ubl conjugation pathway</keyword>
<dbReference type="EMBL" id="BC127518">
    <property type="protein sequence ID" value="AAI27519.1"/>
    <property type="molecule type" value="mRNA"/>
</dbReference>
<dbReference type="RefSeq" id="NP_001073355.1">
    <property type="nucleotide sequence ID" value="NM_001079886.1"/>
</dbReference>
<dbReference type="RefSeq" id="XP_006231527.1">
    <property type="nucleotide sequence ID" value="XM_006231465.3"/>
</dbReference>
<dbReference type="RefSeq" id="XP_006231528.1">
    <property type="nucleotide sequence ID" value="XM_006231466.4"/>
</dbReference>
<dbReference type="RefSeq" id="XP_008758631.2">
    <property type="nucleotide sequence ID" value="XM_008760409.4"/>
</dbReference>
<dbReference type="RefSeq" id="XP_063143327.1">
    <property type="nucleotide sequence ID" value="XM_063287257.1"/>
</dbReference>
<dbReference type="FunCoup" id="A1L131">
    <property type="interactions" value="2522"/>
</dbReference>
<dbReference type="STRING" id="10116.ENSRNOP00000026609"/>
<dbReference type="PhosphoSitePlus" id="A1L131"/>
<dbReference type="PaxDb" id="10116-ENSRNOP00000026609"/>
<dbReference type="PeptideAtlas" id="A1L131"/>
<dbReference type="GeneID" id="294009"/>
<dbReference type="KEGG" id="rno:294009"/>
<dbReference type="AGR" id="RGD:1308096"/>
<dbReference type="CTD" id="79004"/>
<dbReference type="RGD" id="1308096">
    <property type="gene designation" value="Cuedc2"/>
</dbReference>
<dbReference type="VEuPathDB" id="HostDB:ENSRNOG00000019574"/>
<dbReference type="eggNOG" id="ENOG502RZII">
    <property type="taxonomic scope" value="Eukaryota"/>
</dbReference>
<dbReference type="HOGENOM" id="CLU_048031_0_0_1"/>
<dbReference type="InParanoid" id="A1L131"/>
<dbReference type="PhylomeDB" id="A1L131"/>
<dbReference type="PRO" id="PR:A1L131"/>
<dbReference type="Proteomes" id="UP000002494">
    <property type="component" value="Chromosome 1"/>
</dbReference>
<dbReference type="Bgee" id="ENSRNOG00000019574">
    <property type="expression patterns" value="Expressed in thymus and 19 other cell types or tissues"/>
</dbReference>
<dbReference type="GO" id="GO:0005737">
    <property type="term" value="C:cytoplasm"/>
    <property type="evidence" value="ECO:0007669"/>
    <property type="project" value="UniProtKB-SubCell"/>
</dbReference>
<dbReference type="GO" id="GO:0005634">
    <property type="term" value="C:nucleus"/>
    <property type="evidence" value="ECO:0007669"/>
    <property type="project" value="UniProtKB-SubCell"/>
</dbReference>
<dbReference type="GO" id="GO:0043130">
    <property type="term" value="F:ubiquitin binding"/>
    <property type="evidence" value="ECO:0007669"/>
    <property type="project" value="InterPro"/>
</dbReference>
<dbReference type="GO" id="GO:1900016">
    <property type="term" value="P:negative regulation of cytokine production involved in inflammatory response"/>
    <property type="evidence" value="ECO:0000266"/>
    <property type="project" value="RGD"/>
</dbReference>
<dbReference type="GO" id="GO:0010936">
    <property type="term" value="P:negative regulation of macrophage cytokine production"/>
    <property type="evidence" value="ECO:0000266"/>
    <property type="project" value="RGD"/>
</dbReference>
<dbReference type="CDD" id="cd14367">
    <property type="entry name" value="CUE_CUED2"/>
    <property type="match status" value="1"/>
</dbReference>
<dbReference type="InterPro" id="IPR003892">
    <property type="entry name" value="CUE"/>
</dbReference>
<dbReference type="InterPro" id="IPR039805">
    <property type="entry name" value="CUE_CUED2"/>
</dbReference>
<dbReference type="PANTHER" id="PTHR12493">
    <property type="entry name" value="CUE DOMAIN CONTAINING 2"/>
    <property type="match status" value="1"/>
</dbReference>
<dbReference type="PANTHER" id="PTHR12493:SF0">
    <property type="entry name" value="CUE DOMAIN-CONTAINING PROTEIN 2"/>
    <property type="match status" value="1"/>
</dbReference>
<dbReference type="PROSITE" id="PS51140">
    <property type="entry name" value="CUE"/>
    <property type="match status" value="1"/>
</dbReference>
<gene>
    <name type="primary">Cuedc2</name>
</gene>
<sequence>MELERIVSSALFAFVQTHLPEADLSGLDEVIFSYVLGVLEDLGPSGPSEENFDMEAFIEMMEAYVPGFAHIHRGIIEDMVQTLSVQLSSARNKETLRRPEKLKEESRPPAATGNTQDEAAAAEEEQPGVDVLLEVFPTCSMEQAQWVLAKARGNLEEAVQMLIEGKEEGPPGWGGPNQDLPRRLRGPRKEELKSFILQKYMMVDRAEDQKTHRPMAPKEAPKKLIRYIDNQVVSTKGERFKDVRNPETEEMKATYINLKPARKYRFH</sequence>